<organism>
    <name type="scientific">Rhizobium tropici</name>
    <dbReference type="NCBI Taxonomy" id="398"/>
    <lineage>
        <taxon>Bacteria</taxon>
        <taxon>Pseudomonadati</taxon>
        <taxon>Pseudomonadota</taxon>
        <taxon>Alphaproteobacteria</taxon>
        <taxon>Hyphomicrobiales</taxon>
        <taxon>Rhizobiaceae</taxon>
        <taxon>Rhizobium/Agrobacterium group</taxon>
        <taxon>Rhizobium</taxon>
    </lineage>
</organism>
<comment type="function">
    <text evidence="1">Proposed to provide activated sulfate for transfer to Nod factor. ATP sulfurylase may be the GTPase, regulating ATP sulfurylase activity (By similarity).</text>
</comment>
<comment type="function">
    <text evidence="1">APS kinase catalyzes the synthesis of activated sulfate.</text>
</comment>
<comment type="catalytic activity">
    <reaction>
        <text>sulfate + ATP + H(+) = adenosine 5'-phosphosulfate + diphosphate</text>
        <dbReference type="Rhea" id="RHEA:18133"/>
        <dbReference type="ChEBI" id="CHEBI:15378"/>
        <dbReference type="ChEBI" id="CHEBI:16189"/>
        <dbReference type="ChEBI" id="CHEBI:30616"/>
        <dbReference type="ChEBI" id="CHEBI:33019"/>
        <dbReference type="ChEBI" id="CHEBI:58243"/>
        <dbReference type="EC" id="2.7.7.4"/>
    </reaction>
</comment>
<comment type="catalytic activity">
    <reaction>
        <text>adenosine 5'-phosphosulfate + ATP = 3'-phosphoadenylyl sulfate + ADP + H(+)</text>
        <dbReference type="Rhea" id="RHEA:24152"/>
        <dbReference type="ChEBI" id="CHEBI:15378"/>
        <dbReference type="ChEBI" id="CHEBI:30616"/>
        <dbReference type="ChEBI" id="CHEBI:58243"/>
        <dbReference type="ChEBI" id="CHEBI:58339"/>
        <dbReference type="ChEBI" id="CHEBI:456216"/>
        <dbReference type="EC" id="2.7.1.25"/>
    </reaction>
</comment>
<comment type="subunit">
    <text>Sulfate-activating enzymes, NodP and NodQ, may be physically associated.</text>
</comment>
<comment type="similarity">
    <text evidence="3">In the C-terminal section; belongs to the APS kinase family.</text>
</comment>
<comment type="similarity">
    <text evidence="3">In the N-terminal section; belongs to the TRAFAC class translation factor GTPase superfamily. Classic translation factor GTPase family. CysN/NodQ subfamily.</text>
</comment>
<name>NODQ_RHITR</name>
<keyword id="KW-0067">ATP-binding</keyword>
<keyword id="KW-0342">GTP-binding</keyword>
<keyword id="KW-0418">Kinase</keyword>
<keyword id="KW-0511">Multifunctional enzyme</keyword>
<keyword id="KW-0536">Nodulation</keyword>
<keyword id="KW-0547">Nucleotide-binding</keyword>
<keyword id="KW-0548">Nucleotidyltransferase</keyword>
<keyword id="KW-0808">Transferase</keyword>
<protein>
    <recommendedName>
        <fullName>Bifunctional enzyme NodQ</fullName>
    </recommendedName>
    <alternativeName>
        <fullName>Nodulation protein Q</fullName>
    </alternativeName>
    <domain>
        <recommendedName>
            <fullName>Sulfate adenylyltransferase subunit 1</fullName>
            <ecNumber>2.7.7.4</ecNumber>
        </recommendedName>
        <alternativeName>
            <fullName>ATP-sulfurylase large subunit</fullName>
        </alternativeName>
        <alternativeName>
            <fullName>Sulfate adenylate transferase</fullName>
            <shortName>SAT</shortName>
        </alternativeName>
    </domain>
    <domain>
        <recommendedName>
            <fullName>Adenylyl-sulfate kinase</fullName>
            <ecNumber>2.7.1.25</ecNumber>
        </recommendedName>
        <alternativeName>
            <fullName>APS kinase</fullName>
        </alternativeName>
        <alternativeName>
            <fullName>ATP adenosine-5'-phosphosulfate 3'-phosphotransferase</fullName>
        </alternativeName>
    </domain>
</protein>
<accession>P52978</accession>
<dbReference type="EC" id="2.7.7.4"/>
<dbReference type="EC" id="2.7.1.25"/>
<dbReference type="EMBL" id="U47272">
    <property type="protein sequence ID" value="AAB08984.1"/>
    <property type="molecule type" value="Genomic_DNA"/>
</dbReference>
<dbReference type="EMBL" id="X87608">
    <property type="protein sequence ID" value="CAA60914.1"/>
    <property type="molecule type" value="Genomic_DNA"/>
</dbReference>
<dbReference type="SMR" id="P52978"/>
<dbReference type="GO" id="GO:0004020">
    <property type="term" value="F:adenylylsulfate kinase activity"/>
    <property type="evidence" value="ECO:0007669"/>
    <property type="project" value="UniProtKB-UniRule"/>
</dbReference>
<dbReference type="GO" id="GO:0005524">
    <property type="term" value="F:ATP binding"/>
    <property type="evidence" value="ECO:0007669"/>
    <property type="project" value="UniProtKB-UniRule"/>
</dbReference>
<dbReference type="GO" id="GO:0005525">
    <property type="term" value="F:GTP binding"/>
    <property type="evidence" value="ECO:0007669"/>
    <property type="project" value="UniProtKB-UniRule"/>
</dbReference>
<dbReference type="GO" id="GO:0003924">
    <property type="term" value="F:GTPase activity"/>
    <property type="evidence" value="ECO:0007669"/>
    <property type="project" value="InterPro"/>
</dbReference>
<dbReference type="GO" id="GO:0004781">
    <property type="term" value="F:sulfate adenylyltransferase (ATP) activity"/>
    <property type="evidence" value="ECO:0007669"/>
    <property type="project" value="UniProtKB-UniRule"/>
</dbReference>
<dbReference type="GO" id="GO:0070814">
    <property type="term" value="P:hydrogen sulfide biosynthetic process"/>
    <property type="evidence" value="ECO:0007669"/>
    <property type="project" value="UniProtKB-UniRule"/>
</dbReference>
<dbReference type="GO" id="GO:0000103">
    <property type="term" value="P:sulfate assimilation"/>
    <property type="evidence" value="ECO:0007669"/>
    <property type="project" value="UniProtKB-UniRule"/>
</dbReference>
<dbReference type="CDD" id="cd02027">
    <property type="entry name" value="APSK"/>
    <property type="match status" value="1"/>
</dbReference>
<dbReference type="CDD" id="cd04166">
    <property type="entry name" value="CysN_ATPS"/>
    <property type="match status" value="1"/>
</dbReference>
<dbReference type="CDD" id="cd03695">
    <property type="entry name" value="CysN_NodQ_II"/>
    <property type="match status" value="1"/>
</dbReference>
<dbReference type="CDD" id="cd04095">
    <property type="entry name" value="CysN_NoDQ_III"/>
    <property type="match status" value="1"/>
</dbReference>
<dbReference type="FunFam" id="3.40.50.300:FF:000212">
    <property type="entry name" value="Adenylyl-sulfate kinase"/>
    <property type="match status" value="1"/>
</dbReference>
<dbReference type="FunFam" id="3.40.50.300:FF:000119">
    <property type="entry name" value="Sulfate adenylyltransferase subunit 1"/>
    <property type="match status" value="1"/>
</dbReference>
<dbReference type="Gene3D" id="3.40.50.300">
    <property type="entry name" value="P-loop containing nucleotide triphosphate hydrolases"/>
    <property type="match status" value="2"/>
</dbReference>
<dbReference type="Gene3D" id="2.40.30.10">
    <property type="entry name" value="Translation factors"/>
    <property type="match status" value="2"/>
</dbReference>
<dbReference type="HAMAP" id="MF_00065">
    <property type="entry name" value="Adenylyl_sulf_kinase"/>
    <property type="match status" value="1"/>
</dbReference>
<dbReference type="HAMAP" id="MF_00062">
    <property type="entry name" value="Sulf_adenylyltr_sub1"/>
    <property type="match status" value="1"/>
</dbReference>
<dbReference type="InterPro" id="IPR002891">
    <property type="entry name" value="APS_kinase"/>
</dbReference>
<dbReference type="InterPro" id="IPR041757">
    <property type="entry name" value="CysN_GTP-bd"/>
</dbReference>
<dbReference type="InterPro" id="IPR044138">
    <property type="entry name" value="CysN_II"/>
</dbReference>
<dbReference type="InterPro" id="IPR044139">
    <property type="entry name" value="CysN_NoDQ_III"/>
</dbReference>
<dbReference type="InterPro" id="IPR031157">
    <property type="entry name" value="G_TR_CS"/>
</dbReference>
<dbReference type="InterPro" id="IPR054696">
    <property type="entry name" value="GTP-eEF1A_C"/>
</dbReference>
<dbReference type="InterPro" id="IPR027417">
    <property type="entry name" value="P-loop_NTPase"/>
</dbReference>
<dbReference type="InterPro" id="IPR011779">
    <property type="entry name" value="SO4_adenylTrfase_lsu"/>
</dbReference>
<dbReference type="InterPro" id="IPR000795">
    <property type="entry name" value="T_Tr_GTP-bd_dom"/>
</dbReference>
<dbReference type="InterPro" id="IPR050100">
    <property type="entry name" value="TRAFAC_GTPase_members"/>
</dbReference>
<dbReference type="InterPro" id="IPR009000">
    <property type="entry name" value="Transl_B-barrel_sf"/>
</dbReference>
<dbReference type="InterPro" id="IPR009001">
    <property type="entry name" value="Transl_elong_EF1A/Init_IF2_C"/>
</dbReference>
<dbReference type="NCBIfam" id="TIGR00455">
    <property type="entry name" value="apsK"/>
    <property type="match status" value="1"/>
</dbReference>
<dbReference type="NCBIfam" id="TIGR02034">
    <property type="entry name" value="CysN"/>
    <property type="match status" value="1"/>
</dbReference>
<dbReference type="NCBIfam" id="NF003013">
    <property type="entry name" value="PRK03846.1"/>
    <property type="match status" value="1"/>
</dbReference>
<dbReference type="NCBIfam" id="NF004035">
    <property type="entry name" value="PRK05506.1"/>
    <property type="match status" value="1"/>
</dbReference>
<dbReference type="PANTHER" id="PTHR23115">
    <property type="entry name" value="TRANSLATION FACTOR"/>
    <property type="match status" value="1"/>
</dbReference>
<dbReference type="Pfam" id="PF01583">
    <property type="entry name" value="APS_kinase"/>
    <property type="match status" value="1"/>
</dbReference>
<dbReference type="Pfam" id="PF22594">
    <property type="entry name" value="GTP-eEF1A_C"/>
    <property type="match status" value="1"/>
</dbReference>
<dbReference type="Pfam" id="PF00009">
    <property type="entry name" value="GTP_EFTU"/>
    <property type="match status" value="1"/>
</dbReference>
<dbReference type="PRINTS" id="PR00315">
    <property type="entry name" value="ELONGATNFCT"/>
</dbReference>
<dbReference type="SUPFAM" id="SSF50465">
    <property type="entry name" value="EF-Tu/eEF-1alpha/eIF2-gamma C-terminal domain"/>
    <property type="match status" value="1"/>
</dbReference>
<dbReference type="SUPFAM" id="SSF52540">
    <property type="entry name" value="P-loop containing nucleoside triphosphate hydrolases"/>
    <property type="match status" value="2"/>
</dbReference>
<dbReference type="SUPFAM" id="SSF50447">
    <property type="entry name" value="Translation proteins"/>
    <property type="match status" value="1"/>
</dbReference>
<dbReference type="PROSITE" id="PS00301">
    <property type="entry name" value="G_TR_1"/>
    <property type="match status" value="1"/>
</dbReference>
<dbReference type="PROSITE" id="PS51722">
    <property type="entry name" value="G_TR_2"/>
    <property type="match status" value="1"/>
</dbReference>
<sequence length="632" mass="69815">MPYPFSISPHDMEEHLVQEDKGPVLRFITCGSVDDGKSTLIGRLLCDAQLVFEDQLADLRHGGIRGGNGEEIDFSLVLDGLEAEREQGITIDVAYRYFSTSKRKFIVADTPGHFEYTRNMATGASTADLAVILVDSRQGILQQTRRHSYLASLLGIRHVVLAVNKIDLIDFSEPIFDAIVAEYVRFSAKLGFASVMAIPMSARFGDNVVSKSGKLPWYQGSPLLEYLETVELDAPDRQEPFRFPVQLVMRPNADFRGYAGRIASGKIAVGDPVIVAKSGLRSSVRAIIAPDGNQISAAEGEPVTLVLADEVDVSRGDMLVDPASRPFVSDQFQAHLIWFDANPMLPGRSYLLRTETDSVSATVTVLKHQLNVDSFVREPAKLLQMNEVGVCNIMTQRPIVFDAYKENRSTGNFIIVDRVSSATVGAGMIDFPLRRADNVHWQALDVDKAARSALKNQKPAVLWLTGLSGSGKSTIANALEALLHTCGKHTYLLDGDNVRHGLNRDLGFTAVDRVENIRRVAEVAKLMADAGLIVICSFISPFRDERRMARELMGEGEFIEIFVDTPLDECARRDPKGLYKKAFAGNIANFTGVSSPYEAPENPELHLKTMGQEPARLALQIEEFLRSRMEEK</sequence>
<evidence type="ECO:0000250" key="1"/>
<evidence type="ECO:0000255" key="2"/>
<evidence type="ECO:0000305" key="3"/>
<proteinExistence type="inferred from homology"/>
<gene>
    <name type="primary">nodQ</name>
</gene>
<feature type="chain" id="PRO_0000091545" description="Bifunctional enzyme NodQ">
    <location>
        <begin position="1"/>
        <end position="632"/>
    </location>
</feature>
<feature type="domain" description="tr-type G">
    <location>
        <begin position="22"/>
        <end position="236"/>
    </location>
</feature>
<feature type="region of interest" description="Sulfate adenylyltransferase">
    <location>
        <begin position="1"/>
        <end position="457"/>
    </location>
</feature>
<feature type="region of interest" description="G1" evidence="1">
    <location>
        <begin position="31"/>
        <end position="38"/>
    </location>
</feature>
<feature type="region of interest" description="G2" evidence="1">
    <location>
        <begin position="88"/>
        <end position="92"/>
    </location>
</feature>
<feature type="region of interest" description="G3" evidence="1">
    <location>
        <begin position="109"/>
        <end position="112"/>
    </location>
</feature>
<feature type="region of interest" description="G4" evidence="1">
    <location>
        <begin position="164"/>
        <end position="167"/>
    </location>
</feature>
<feature type="region of interest" description="G5" evidence="1">
    <location>
        <begin position="187"/>
        <end position="189"/>
    </location>
</feature>
<feature type="region of interest" description="Adenylyl-sulfate kinase">
    <location>
        <begin position="458"/>
        <end position="632"/>
    </location>
</feature>
<feature type="active site" description="Phosphoserine intermediate" evidence="1">
    <location>
        <position position="540"/>
    </location>
</feature>
<feature type="binding site" evidence="1">
    <location>
        <begin position="31"/>
        <end position="38"/>
    </location>
    <ligand>
        <name>GTP</name>
        <dbReference type="ChEBI" id="CHEBI:37565"/>
    </ligand>
</feature>
<feature type="binding site" evidence="1">
    <location>
        <begin position="109"/>
        <end position="113"/>
    </location>
    <ligand>
        <name>GTP</name>
        <dbReference type="ChEBI" id="CHEBI:37565"/>
    </ligand>
</feature>
<feature type="binding site" evidence="1">
    <location>
        <begin position="164"/>
        <end position="167"/>
    </location>
    <ligand>
        <name>GTP</name>
        <dbReference type="ChEBI" id="CHEBI:37565"/>
    </ligand>
</feature>
<feature type="binding site" evidence="2">
    <location>
        <begin position="466"/>
        <end position="473"/>
    </location>
    <ligand>
        <name>ATP</name>
        <dbReference type="ChEBI" id="CHEBI:30616"/>
    </ligand>
</feature>
<reference key="1">
    <citation type="journal article" date="1996" name="Mol. Plant Microbe Interact.">
        <title>Isolation and characterization of Rhizobium tropici Nod factor sulfation genes.</title>
        <authorList>
            <person name="Laeremans T."/>
            <person name="Caluwaerts I."/>
            <person name="Verreth C."/>
            <person name="Rogel M.A."/>
            <person name="Vanderleyden J."/>
            <person name="Martinez-Romero E."/>
        </authorList>
    </citation>
    <scope>NUCLEOTIDE SEQUENCE [GENOMIC DNA]</scope>
    <source>
        <strain>CFN 299</strain>
    </source>
</reference>
<reference key="2">
    <citation type="journal article" date="1996" name="Mol. Plant Microbe Interact.">
        <title>Characterization of Rhizobium tropici CIAT899 nodulation factors: the role of nodH and nodPQ genes in their sulfation.</title>
        <authorList>
            <person name="Folch-Mallol J.L."/>
            <person name="Marroqui S."/>
            <person name="Sousa C."/>
            <person name="Manyani H."/>
            <person name="Lopez-Lara I.M."/>
            <person name="van der Drift K.M.G.M."/>
            <person name="Haverkamp J."/>
            <person name="Quinto C."/>
            <person name="Gil-Serrano A."/>
            <person name="Thomas-Oates J."/>
            <person name="Spaink H.P."/>
            <person name="Megias M."/>
        </authorList>
    </citation>
    <scope>NUCLEOTIDE SEQUENCE [GENOMIC DNA]</scope>
    <source>
        <strain>CIAT899</strain>
    </source>
</reference>